<organism>
    <name type="scientific">Cupriavidus necator (strain ATCC 17699 / DSM 428 / KCTC 22496 / NCIMB 10442 / H16 / Stanier 337)</name>
    <name type="common">Ralstonia eutropha</name>
    <dbReference type="NCBI Taxonomy" id="381666"/>
    <lineage>
        <taxon>Bacteria</taxon>
        <taxon>Pseudomonadati</taxon>
        <taxon>Pseudomonadota</taxon>
        <taxon>Betaproteobacteria</taxon>
        <taxon>Burkholderiales</taxon>
        <taxon>Burkholderiaceae</taxon>
        <taxon>Cupriavidus</taxon>
    </lineage>
</organism>
<dbReference type="EC" id="5.4.99.12" evidence="1"/>
<dbReference type="EMBL" id="AM260479">
    <property type="protein sequence ID" value="CAJ93698.1"/>
    <property type="molecule type" value="Genomic_DNA"/>
</dbReference>
<dbReference type="RefSeq" id="WP_011615742.1">
    <property type="nucleotide sequence ID" value="NC_008313.1"/>
</dbReference>
<dbReference type="SMR" id="Q0K8H3"/>
<dbReference type="STRING" id="381666.H16_A2616"/>
<dbReference type="KEGG" id="reh:H16_A2616"/>
<dbReference type="PATRIC" id="fig|381666.6.peg.3003"/>
<dbReference type="eggNOG" id="COG0101">
    <property type="taxonomic scope" value="Bacteria"/>
</dbReference>
<dbReference type="HOGENOM" id="CLU_014673_0_2_4"/>
<dbReference type="OrthoDB" id="9811823at2"/>
<dbReference type="Proteomes" id="UP000008210">
    <property type="component" value="Chromosome 1"/>
</dbReference>
<dbReference type="GO" id="GO:0003723">
    <property type="term" value="F:RNA binding"/>
    <property type="evidence" value="ECO:0007669"/>
    <property type="project" value="InterPro"/>
</dbReference>
<dbReference type="GO" id="GO:0160147">
    <property type="term" value="F:tRNA pseudouridine(38-40) synthase activity"/>
    <property type="evidence" value="ECO:0007669"/>
    <property type="project" value="UniProtKB-EC"/>
</dbReference>
<dbReference type="GO" id="GO:0031119">
    <property type="term" value="P:tRNA pseudouridine synthesis"/>
    <property type="evidence" value="ECO:0007669"/>
    <property type="project" value="UniProtKB-UniRule"/>
</dbReference>
<dbReference type="CDD" id="cd02570">
    <property type="entry name" value="PseudoU_synth_EcTruA"/>
    <property type="match status" value="1"/>
</dbReference>
<dbReference type="FunFam" id="3.30.70.580:FF:000001">
    <property type="entry name" value="tRNA pseudouridine synthase A"/>
    <property type="match status" value="1"/>
</dbReference>
<dbReference type="Gene3D" id="3.30.70.660">
    <property type="entry name" value="Pseudouridine synthase I, catalytic domain, C-terminal subdomain"/>
    <property type="match status" value="1"/>
</dbReference>
<dbReference type="Gene3D" id="3.30.70.580">
    <property type="entry name" value="Pseudouridine synthase I, catalytic domain, N-terminal subdomain"/>
    <property type="match status" value="1"/>
</dbReference>
<dbReference type="HAMAP" id="MF_00171">
    <property type="entry name" value="TruA"/>
    <property type="match status" value="1"/>
</dbReference>
<dbReference type="InterPro" id="IPR020103">
    <property type="entry name" value="PsdUridine_synth_cat_dom_sf"/>
</dbReference>
<dbReference type="InterPro" id="IPR001406">
    <property type="entry name" value="PsdUridine_synth_TruA"/>
</dbReference>
<dbReference type="InterPro" id="IPR020097">
    <property type="entry name" value="PsdUridine_synth_TruA_a/b_dom"/>
</dbReference>
<dbReference type="InterPro" id="IPR020095">
    <property type="entry name" value="PsdUridine_synth_TruA_C"/>
</dbReference>
<dbReference type="InterPro" id="IPR020094">
    <property type="entry name" value="TruA/RsuA/RluB/E/F_N"/>
</dbReference>
<dbReference type="NCBIfam" id="TIGR00071">
    <property type="entry name" value="hisT_truA"/>
    <property type="match status" value="1"/>
</dbReference>
<dbReference type="PANTHER" id="PTHR11142">
    <property type="entry name" value="PSEUDOURIDYLATE SYNTHASE"/>
    <property type="match status" value="1"/>
</dbReference>
<dbReference type="PANTHER" id="PTHR11142:SF0">
    <property type="entry name" value="TRNA PSEUDOURIDINE SYNTHASE-LIKE 1"/>
    <property type="match status" value="1"/>
</dbReference>
<dbReference type="Pfam" id="PF01416">
    <property type="entry name" value="PseudoU_synth_1"/>
    <property type="match status" value="2"/>
</dbReference>
<dbReference type="PIRSF" id="PIRSF001430">
    <property type="entry name" value="tRNA_psdUrid_synth"/>
    <property type="match status" value="1"/>
</dbReference>
<dbReference type="SUPFAM" id="SSF55120">
    <property type="entry name" value="Pseudouridine synthase"/>
    <property type="match status" value="1"/>
</dbReference>
<protein>
    <recommendedName>
        <fullName evidence="1">tRNA pseudouridine synthase A</fullName>
        <ecNumber evidence="1">5.4.99.12</ecNumber>
    </recommendedName>
    <alternativeName>
        <fullName evidence="1">tRNA pseudouridine(38-40) synthase</fullName>
    </alternativeName>
    <alternativeName>
        <fullName evidence="1">tRNA pseudouridylate synthase I</fullName>
    </alternativeName>
    <alternativeName>
        <fullName evidence="1">tRNA-uridine isomerase I</fullName>
    </alternativeName>
</protein>
<evidence type="ECO:0000255" key="1">
    <source>
        <dbReference type="HAMAP-Rule" id="MF_00171"/>
    </source>
</evidence>
<comment type="function">
    <text evidence="1">Formation of pseudouridine at positions 38, 39 and 40 in the anticodon stem and loop of transfer RNAs.</text>
</comment>
<comment type="catalytic activity">
    <reaction evidence="1">
        <text>uridine(38/39/40) in tRNA = pseudouridine(38/39/40) in tRNA</text>
        <dbReference type="Rhea" id="RHEA:22376"/>
        <dbReference type="Rhea" id="RHEA-COMP:10085"/>
        <dbReference type="Rhea" id="RHEA-COMP:10087"/>
        <dbReference type="ChEBI" id="CHEBI:65314"/>
        <dbReference type="ChEBI" id="CHEBI:65315"/>
        <dbReference type="EC" id="5.4.99.12"/>
    </reaction>
</comment>
<comment type="subunit">
    <text evidence="1">Homodimer.</text>
</comment>
<comment type="similarity">
    <text evidence="1">Belongs to the tRNA pseudouridine synthase TruA family.</text>
</comment>
<feature type="chain" id="PRO_1000017147" description="tRNA pseudouridine synthase A">
    <location>
        <begin position="1"/>
        <end position="272"/>
    </location>
</feature>
<feature type="active site" description="Nucleophile" evidence="1">
    <location>
        <position position="52"/>
    </location>
</feature>
<feature type="binding site" evidence="1">
    <location>
        <position position="110"/>
    </location>
    <ligand>
        <name>substrate</name>
    </ligand>
</feature>
<sequence>MNRIALGLHYDGAAFSGWQSQPHRNTVQDHLENAIERFAGVRLLTTVAGRTDTGVHALGQVIHLDTALEREPFSWVRGVNAFLPPSIALQWALPVDQGFHARFLAFERMYYYALYTGPHRVPLVHGRAGYQMLPPGQRLDVDAMREAAACLLGEHDFSAFRAAECQAKSPVKTMYDVTIRDDGNWVFLRFRASAFLHHMVRNLMGCLVAVGRGRYPAHWLAQVLAGRERKLAAPTFMPDGLYLVGVKYPDPYQIPAADPSASLFHGVFDDAA</sequence>
<reference key="1">
    <citation type="journal article" date="2006" name="Nat. Biotechnol.">
        <title>Genome sequence of the bioplastic-producing 'Knallgas' bacterium Ralstonia eutropha H16.</title>
        <authorList>
            <person name="Pohlmann A."/>
            <person name="Fricke W.F."/>
            <person name="Reinecke F."/>
            <person name="Kusian B."/>
            <person name="Liesegang H."/>
            <person name="Cramm R."/>
            <person name="Eitinger T."/>
            <person name="Ewering C."/>
            <person name="Poetter M."/>
            <person name="Schwartz E."/>
            <person name="Strittmatter A."/>
            <person name="Voss I."/>
            <person name="Gottschalk G."/>
            <person name="Steinbuechel A."/>
            <person name="Friedrich B."/>
            <person name="Bowien B."/>
        </authorList>
    </citation>
    <scope>NUCLEOTIDE SEQUENCE [LARGE SCALE GENOMIC DNA]</scope>
    <source>
        <strain>ATCC 17699 / DSM 428 / KCTC 22496 / NCIMB 10442 / H16 / Stanier 337</strain>
    </source>
</reference>
<proteinExistence type="inferred from homology"/>
<gene>
    <name evidence="1" type="primary">truA</name>
    <name type="ordered locus">H16_A2616</name>
</gene>
<name>TRUA_CUPNH</name>
<keyword id="KW-0413">Isomerase</keyword>
<keyword id="KW-1185">Reference proteome</keyword>
<keyword id="KW-0819">tRNA processing</keyword>
<accession>Q0K8H3</accession>